<evidence type="ECO:0000255" key="1">
    <source>
        <dbReference type="HAMAP-Rule" id="MF_00530"/>
    </source>
</evidence>
<keyword id="KW-0066">ATP synthesis</keyword>
<keyword id="KW-0997">Cell inner membrane</keyword>
<keyword id="KW-1003">Cell membrane</keyword>
<keyword id="KW-0139">CF(1)</keyword>
<keyword id="KW-0375">Hydrogen ion transport</keyword>
<keyword id="KW-0406">Ion transport</keyword>
<keyword id="KW-0472">Membrane</keyword>
<keyword id="KW-1185">Reference proteome</keyword>
<keyword id="KW-0813">Transport</keyword>
<feature type="chain" id="PRO_1000056453" description="ATP synthase epsilon chain">
    <location>
        <begin position="1"/>
        <end position="132"/>
    </location>
</feature>
<organism>
    <name type="scientific">Anaeromyxobacter sp. (strain Fw109-5)</name>
    <dbReference type="NCBI Taxonomy" id="404589"/>
    <lineage>
        <taxon>Bacteria</taxon>
        <taxon>Pseudomonadati</taxon>
        <taxon>Myxococcota</taxon>
        <taxon>Myxococcia</taxon>
        <taxon>Myxococcales</taxon>
        <taxon>Cystobacterineae</taxon>
        <taxon>Anaeromyxobacteraceae</taxon>
        <taxon>Anaeromyxobacter</taxon>
    </lineage>
</organism>
<comment type="function">
    <text evidence="1">Produces ATP from ADP in the presence of a proton gradient across the membrane.</text>
</comment>
<comment type="subunit">
    <text evidence="1">F-type ATPases have 2 components, CF(1) - the catalytic core - and CF(0) - the membrane proton channel. CF(1) has five subunits: alpha(3), beta(3), gamma(1), delta(1), epsilon(1). CF(0) has three main subunits: a, b and c.</text>
</comment>
<comment type="subcellular location">
    <subcellularLocation>
        <location evidence="1">Cell inner membrane</location>
        <topology evidence="1">Peripheral membrane protein</topology>
    </subcellularLocation>
</comment>
<comment type="similarity">
    <text evidence="1">Belongs to the ATPase epsilon chain family.</text>
</comment>
<proteinExistence type="inferred from homology"/>
<protein>
    <recommendedName>
        <fullName evidence="1">ATP synthase epsilon chain</fullName>
    </recommendedName>
    <alternativeName>
        <fullName evidence="1">ATP synthase F1 sector epsilon subunit</fullName>
    </alternativeName>
    <alternativeName>
        <fullName evidence="1">F-ATPase epsilon subunit</fullName>
    </alternativeName>
</protein>
<accession>A7HIX6</accession>
<sequence length="132" mass="14369">MALTLDIVTPERRVLSVTVDEVRAPGAAGGFGIRVNHEPFMTALEPGRLTYVEGGREHHYAIGGGFLQVAENRVIVLADTAEAAGDIDVERAKRAFQDAQDRLLRMTEQDEHHPAESARVKRAAARISVAGR</sequence>
<name>ATPE_ANADF</name>
<gene>
    <name evidence="1" type="primary">atpC</name>
    <name type="ordered locus">Anae109_4494</name>
</gene>
<dbReference type="EMBL" id="CP000769">
    <property type="protein sequence ID" value="ABS28672.1"/>
    <property type="molecule type" value="Genomic_DNA"/>
</dbReference>
<dbReference type="RefSeq" id="WP_012099322.1">
    <property type="nucleotide sequence ID" value="NC_009675.1"/>
</dbReference>
<dbReference type="SMR" id="A7HIX6"/>
<dbReference type="STRING" id="404589.Anae109_4494"/>
<dbReference type="KEGG" id="afw:Anae109_4494"/>
<dbReference type="eggNOG" id="COG0355">
    <property type="taxonomic scope" value="Bacteria"/>
</dbReference>
<dbReference type="HOGENOM" id="CLU_084338_2_1_7"/>
<dbReference type="OrthoDB" id="9799969at2"/>
<dbReference type="Proteomes" id="UP000006382">
    <property type="component" value="Chromosome"/>
</dbReference>
<dbReference type="GO" id="GO:0005886">
    <property type="term" value="C:plasma membrane"/>
    <property type="evidence" value="ECO:0007669"/>
    <property type="project" value="UniProtKB-SubCell"/>
</dbReference>
<dbReference type="GO" id="GO:0045259">
    <property type="term" value="C:proton-transporting ATP synthase complex"/>
    <property type="evidence" value="ECO:0007669"/>
    <property type="project" value="UniProtKB-KW"/>
</dbReference>
<dbReference type="GO" id="GO:0005524">
    <property type="term" value="F:ATP binding"/>
    <property type="evidence" value="ECO:0007669"/>
    <property type="project" value="UniProtKB-UniRule"/>
</dbReference>
<dbReference type="GO" id="GO:0046933">
    <property type="term" value="F:proton-transporting ATP synthase activity, rotational mechanism"/>
    <property type="evidence" value="ECO:0007669"/>
    <property type="project" value="UniProtKB-UniRule"/>
</dbReference>
<dbReference type="CDD" id="cd12152">
    <property type="entry name" value="F1-ATPase_delta"/>
    <property type="match status" value="1"/>
</dbReference>
<dbReference type="Gene3D" id="2.60.15.10">
    <property type="entry name" value="F0F1 ATP synthase delta/epsilon subunit, N-terminal"/>
    <property type="match status" value="1"/>
</dbReference>
<dbReference type="HAMAP" id="MF_00530">
    <property type="entry name" value="ATP_synth_epsil_bac"/>
    <property type="match status" value="1"/>
</dbReference>
<dbReference type="InterPro" id="IPR001469">
    <property type="entry name" value="ATP_synth_F1_dsu/esu"/>
</dbReference>
<dbReference type="InterPro" id="IPR020546">
    <property type="entry name" value="ATP_synth_F1_dsu/esu_N"/>
</dbReference>
<dbReference type="InterPro" id="IPR020547">
    <property type="entry name" value="ATP_synth_F1_esu_C"/>
</dbReference>
<dbReference type="InterPro" id="IPR036771">
    <property type="entry name" value="ATPsynth_dsu/esu_N"/>
</dbReference>
<dbReference type="NCBIfam" id="TIGR01216">
    <property type="entry name" value="ATP_synt_epsi"/>
    <property type="match status" value="1"/>
</dbReference>
<dbReference type="NCBIfam" id="NF009980">
    <property type="entry name" value="PRK13446.1"/>
    <property type="match status" value="1"/>
</dbReference>
<dbReference type="PANTHER" id="PTHR13822">
    <property type="entry name" value="ATP SYNTHASE DELTA/EPSILON CHAIN"/>
    <property type="match status" value="1"/>
</dbReference>
<dbReference type="PANTHER" id="PTHR13822:SF10">
    <property type="entry name" value="ATP SYNTHASE EPSILON CHAIN, CHLOROPLASTIC"/>
    <property type="match status" value="1"/>
</dbReference>
<dbReference type="Pfam" id="PF00401">
    <property type="entry name" value="ATP-synt_DE"/>
    <property type="match status" value="1"/>
</dbReference>
<dbReference type="Pfam" id="PF02823">
    <property type="entry name" value="ATP-synt_DE_N"/>
    <property type="match status" value="1"/>
</dbReference>
<dbReference type="SUPFAM" id="SSF51344">
    <property type="entry name" value="Epsilon subunit of F1F0-ATP synthase N-terminal domain"/>
    <property type="match status" value="1"/>
</dbReference>
<reference key="1">
    <citation type="journal article" date="2015" name="Genome Announc.">
        <title>Complete genome sequence of Anaeromyxobacter sp. Fw109-5, an anaerobic, metal-reducing bacterium isolated from a contaminated subsurface environment.</title>
        <authorList>
            <person name="Hwang C."/>
            <person name="Copeland A."/>
            <person name="Lucas S."/>
            <person name="Lapidus A."/>
            <person name="Barry K."/>
            <person name="Glavina Del Rio T."/>
            <person name="Dalin E."/>
            <person name="Tice H."/>
            <person name="Pitluck S."/>
            <person name="Sims D."/>
            <person name="Brettin T."/>
            <person name="Bruce D.C."/>
            <person name="Detter J.C."/>
            <person name="Han C.S."/>
            <person name="Schmutz J."/>
            <person name="Larimer F.W."/>
            <person name="Land M.L."/>
            <person name="Hauser L.J."/>
            <person name="Kyrpides N."/>
            <person name="Lykidis A."/>
            <person name="Richardson P."/>
            <person name="Belieav A."/>
            <person name="Sanford R.A."/>
            <person name="Loeffler F.E."/>
            <person name="Fields M.W."/>
        </authorList>
    </citation>
    <scope>NUCLEOTIDE SEQUENCE [LARGE SCALE GENOMIC DNA]</scope>
    <source>
        <strain>Fw109-5</strain>
    </source>
</reference>